<keyword id="KW-0903">Direct protein sequencing</keyword>
<keyword id="KW-0249">Electron transport</keyword>
<keyword id="KW-0349">Heme</keyword>
<keyword id="KW-0408">Iron</keyword>
<keyword id="KW-0479">Metal-binding</keyword>
<keyword id="KW-0602">Photosynthesis</keyword>
<keyword id="KW-1185">Reference proteome</keyword>
<keyword id="KW-0732">Signal</keyword>
<keyword id="KW-0793">Thylakoid</keyword>
<keyword id="KW-0813">Transport</keyword>
<name>CYC6_SYNP3</name>
<comment type="function">
    <text>Functions as an electron carrier between membrane-bound cytochrome b6-f and photosystem I in oxygenic photosynthesis.</text>
</comment>
<comment type="subunit">
    <text evidence="1">Monomer.</text>
</comment>
<comment type="subcellular location">
    <subcellularLocation>
        <location evidence="1">Cellular thylakoid lumen</location>
    </subcellularLocation>
</comment>
<comment type="PTM">
    <text>Binds 1 heme c group covalently per subunit.</text>
</comment>
<comment type="similarity">
    <text evidence="1">Belongs to the cytochrome c family. PetJ subfamily.</text>
</comment>
<protein>
    <recommendedName>
        <fullName evidence="1">Cytochrome c6</fullName>
    </recommendedName>
    <alternativeName>
        <fullName>Cytochrome c-552</fullName>
    </alternativeName>
    <alternativeName>
        <fullName evidence="1">Cytochrome c-553</fullName>
    </alternativeName>
    <alternativeName>
        <fullName evidence="1">Cytochrome c553</fullName>
    </alternativeName>
    <alternativeName>
        <fullName evidence="1">Soluble cytochrome f</fullName>
    </alternativeName>
</protein>
<proteinExistence type="evidence at protein level"/>
<gene>
    <name evidence="1" type="primary">petJ</name>
    <name type="ordered locus">Syn6312_1893</name>
</gene>
<feature type="signal peptide" evidence="1 2">
    <location>
        <begin position="1"/>
        <end position="25"/>
    </location>
</feature>
<feature type="chain" id="PRO_0000208689" description="Cytochrome c6">
    <location>
        <begin position="26"/>
        <end position="112"/>
    </location>
</feature>
<feature type="binding site" description="covalent">
    <location>
        <position position="39"/>
    </location>
    <ligand>
        <name>heme c</name>
        <dbReference type="ChEBI" id="CHEBI:61717"/>
    </ligand>
</feature>
<feature type="binding site" description="covalent">
    <location>
        <position position="42"/>
    </location>
    <ligand>
        <name>heme c</name>
        <dbReference type="ChEBI" id="CHEBI:61717"/>
    </ligand>
</feature>
<feature type="binding site" description="axial binding residue">
    <location>
        <position position="43"/>
    </location>
    <ligand>
        <name>heme c</name>
        <dbReference type="ChEBI" id="CHEBI:61717"/>
    </ligand>
    <ligandPart>
        <name>Fe</name>
        <dbReference type="ChEBI" id="CHEBI:18248"/>
    </ligandPart>
</feature>
<feature type="binding site" description="axial binding residue">
    <location>
        <position position="83"/>
    </location>
    <ligand>
        <name>heme c</name>
        <dbReference type="ChEBI" id="CHEBI:61717"/>
    </ligand>
    <ligandPart>
        <name>Fe</name>
        <dbReference type="ChEBI" id="CHEBI:18248"/>
    </ligandPart>
</feature>
<feature type="sequence conflict" description="In Ref. 2; AA sequence." evidence="3" ref="2">
    <original>KN</original>
    <variation>NK</variation>
    <location>
        <begin position="108"/>
        <end position="109"/>
    </location>
</feature>
<dbReference type="EMBL" id="CP003558">
    <property type="protein sequence ID" value="AFY61034.1"/>
    <property type="molecule type" value="Genomic_DNA"/>
</dbReference>
<dbReference type="RefSeq" id="WP_015124577.1">
    <property type="nucleotide sequence ID" value="NC_019680.1"/>
</dbReference>
<dbReference type="SMR" id="P00115"/>
<dbReference type="STRING" id="195253.Syn6312_1893"/>
<dbReference type="KEGG" id="syne:Syn6312_1893"/>
<dbReference type="PATRIC" id="fig|195253.3.peg.1933"/>
<dbReference type="eggNOG" id="COG2010">
    <property type="taxonomic scope" value="Bacteria"/>
</dbReference>
<dbReference type="HOGENOM" id="CLU_101159_1_0_3"/>
<dbReference type="OrthoDB" id="5570429at2"/>
<dbReference type="Proteomes" id="UP000010379">
    <property type="component" value="Chromosome"/>
</dbReference>
<dbReference type="GO" id="GO:0031979">
    <property type="term" value="C:plasma membrane-derived thylakoid lumen"/>
    <property type="evidence" value="ECO:0007669"/>
    <property type="project" value="UniProtKB-SubCell"/>
</dbReference>
<dbReference type="GO" id="GO:0009055">
    <property type="term" value="F:electron transfer activity"/>
    <property type="evidence" value="ECO:0007669"/>
    <property type="project" value="UniProtKB-UniRule"/>
</dbReference>
<dbReference type="GO" id="GO:0020037">
    <property type="term" value="F:heme binding"/>
    <property type="evidence" value="ECO:0007669"/>
    <property type="project" value="InterPro"/>
</dbReference>
<dbReference type="GO" id="GO:0005506">
    <property type="term" value="F:iron ion binding"/>
    <property type="evidence" value="ECO:0007669"/>
    <property type="project" value="InterPro"/>
</dbReference>
<dbReference type="GO" id="GO:0015979">
    <property type="term" value="P:photosynthesis"/>
    <property type="evidence" value="ECO:0007669"/>
    <property type="project" value="UniProtKB-UniRule"/>
</dbReference>
<dbReference type="FunFam" id="1.10.760.10:FF:000038">
    <property type="entry name" value="Cytochrome c6"/>
    <property type="match status" value="1"/>
</dbReference>
<dbReference type="Gene3D" id="1.10.760.10">
    <property type="entry name" value="Cytochrome c-like domain"/>
    <property type="match status" value="1"/>
</dbReference>
<dbReference type="HAMAP" id="MF_00594">
    <property type="entry name" value="Cytc_PetJ"/>
    <property type="match status" value="1"/>
</dbReference>
<dbReference type="InterPro" id="IPR009056">
    <property type="entry name" value="Cyt_c-like_dom"/>
</dbReference>
<dbReference type="InterPro" id="IPR036909">
    <property type="entry name" value="Cyt_c-like_dom_sf"/>
</dbReference>
<dbReference type="InterPro" id="IPR023655">
    <property type="entry name" value="Cyt_C6"/>
</dbReference>
<dbReference type="InterPro" id="IPR008168">
    <property type="entry name" value="Cyt_C_IC"/>
</dbReference>
<dbReference type="NCBIfam" id="NF045930">
    <property type="entry name" value="Cytc6PetJCyano"/>
    <property type="match status" value="1"/>
</dbReference>
<dbReference type="PANTHER" id="PTHR34688">
    <property type="entry name" value="CYTOCHROME C6, CHLOROPLASTIC"/>
    <property type="match status" value="1"/>
</dbReference>
<dbReference type="PANTHER" id="PTHR34688:SF2">
    <property type="entry name" value="CYTOCHROME C6, CHLOROPLASTIC"/>
    <property type="match status" value="1"/>
</dbReference>
<dbReference type="Pfam" id="PF13442">
    <property type="entry name" value="Cytochrome_CBB3"/>
    <property type="match status" value="1"/>
</dbReference>
<dbReference type="PRINTS" id="PR00605">
    <property type="entry name" value="CYTCHROMECIC"/>
</dbReference>
<dbReference type="SUPFAM" id="SSF46626">
    <property type="entry name" value="Cytochrome c"/>
    <property type="match status" value="1"/>
</dbReference>
<dbReference type="PROSITE" id="PS51007">
    <property type="entry name" value="CYTC"/>
    <property type="match status" value="1"/>
</dbReference>
<sequence length="112" mass="11801">MKTLLTILALTLVTLTTWLSTPAFAADIADGAKVFSANCAACHMGGGNVVMANKTLKKEALEQFGMNSADAIMYQVQNGKNAMPAFGGRLSEAQIENVAAYVLDQSSKNWAG</sequence>
<organism>
    <name type="scientific">Synechococcus sp. (strain ATCC 27167 / PCC 6312)</name>
    <dbReference type="NCBI Taxonomy" id="195253"/>
    <lineage>
        <taxon>Bacteria</taxon>
        <taxon>Bacillati</taxon>
        <taxon>Cyanobacteriota</taxon>
        <taxon>Cyanophyceae</taxon>
        <taxon>Synechococcales</taxon>
        <taxon>Synechococcaceae</taxon>
        <taxon>Synechococcus</taxon>
    </lineage>
</organism>
<evidence type="ECO:0000255" key="1">
    <source>
        <dbReference type="HAMAP-Rule" id="MF_00594"/>
    </source>
</evidence>
<evidence type="ECO:0000269" key="2">
    <source>
    </source>
</evidence>
<evidence type="ECO:0000305" key="3"/>
<reference key="1">
    <citation type="journal article" date="2013" name="Proc. Natl. Acad. Sci. U.S.A.">
        <title>Improving the coverage of the cyanobacterial phylum using diversity-driven genome sequencing.</title>
        <authorList>
            <person name="Shih P.M."/>
            <person name="Wu D."/>
            <person name="Latifi A."/>
            <person name="Axen S.D."/>
            <person name="Fewer D.P."/>
            <person name="Talla E."/>
            <person name="Calteau A."/>
            <person name="Cai F."/>
            <person name="Tandeau de Marsac N."/>
            <person name="Rippka R."/>
            <person name="Herdman M."/>
            <person name="Sivonen K."/>
            <person name="Coursin T."/>
            <person name="Laurent T."/>
            <person name="Goodwin L."/>
            <person name="Nolan M."/>
            <person name="Davenport K.W."/>
            <person name="Han C.S."/>
            <person name="Rubin E.M."/>
            <person name="Eisen J.A."/>
            <person name="Woyke T."/>
            <person name="Gugger M."/>
            <person name="Kerfeld C.A."/>
        </authorList>
    </citation>
    <scope>NUCLEOTIDE SEQUENCE [LARGE SCALE GENOMIC DNA]</scope>
    <source>
        <strain>ATCC 27167 / PCC 6312</strain>
    </source>
</reference>
<reference key="2">
    <citation type="journal article" date="1979" name="Eur. J. Biochem.">
        <title>Purification and primary structure of cytochrome c-552 from the cyanobacterium, Synechococcus PCC 6312.</title>
        <authorList>
            <person name="Aitken A."/>
        </authorList>
    </citation>
    <scope>PROTEIN SEQUENCE OF 26-112</scope>
</reference>
<accession>P00115</accession>
<accession>K9RUR7</accession>